<keyword id="KW-0025">Alternative splicing</keyword>
<keyword id="KW-0175">Coiled coil</keyword>
<keyword id="KW-0238">DNA-binding</keyword>
<keyword id="KW-0539">Nucleus</keyword>
<keyword id="KW-0597">Phosphoprotein</keyword>
<keyword id="KW-1185">Reference proteome</keyword>
<keyword id="KW-0804">Transcription</keyword>
<keyword id="KW-0805">Transcription regulation</keyword>
<sequence length="327" mass="34714">MATMASTSNCSPVATSPLMMLLFKALQEGGDSEDEARRRREQLNRRPSYRMILKDLETADKVMKKEPEETPPSSVDASPLQFQSVMRPPPTAPPTSAATPNRILPSSNAASPYGSPLGSSILSNQPLVLPFAPINGDFDFSAAIAAASQPKVFPGGPQQNGLGGGGGGGGVPGPSSGIAGMSVQPPTSSTPSQQQSVQSLEGTSGLIGSAMKPMLGIDAVSFPEFGTTDWQSPMLSGGYSSSPSPTMTGGSMRMGGGPLHGEDESNRKRQVRLLKNREAAKECRRKKKEYVKCLENRVSVLENQNKALIEELKTLKELYCRKEKDGM</sequence>
<gene>
    <name evidence="19" type="primary">crh-1</name>
    <name evidence="19" type="ORF">Y41C4A.4</name>
</gene>
<proteinExistence type="evidence at protein level"/>
<accession>Q9U2I0</accession>
<accession>D0Z5N1</accession>
<accession>D0Z5N2</accession>
<accession>G5EBL5</accession>
<accession>G5ECG1</accession>
<accession>Q8I4D7</accession>
<accession>Q8I4D8</accession>
<organism evidence="17">
    <name type="scientific">Caenorhabditis elegans</name>
    <dbReference type="NCBI Taxonomy" id="6239"/>
    <lineage>
        <taxon>Eukaryota</taxon>
        <taxon>Metazoa</taxon>
        <taxon>Ecdysozoa</taxon>
        <taxon>Nematoda</taxon>
        <taxon>Chromadorea</taxon>
        <taxon>Rhabditida</taxon>
        <taxon>Rhabditina</taxon>
        <taxon>Rhabditomorpha</taxon>
        <taxon>Rhabditoidea</taxon>
        <taxon>Rhabditidae</taxon>
        <taxon>Peloderinae</taxon>
        <taxon>Caenorhabditis</taxon>
    </lineage>
</organism>
<comment type="function">
    <text evidence="5 6 7 8 9 10 11">Transcription factor (PubMed:12231504, PubMed:21331044). Transcriptional activity probably positively regulated by phosphorylation (PubMed:12231504, PubMed:27720609). Modulates expression of target genes, acting by binding to regulatory cAMP response elements (CRE) (PubMed:12231504, PubMed:27720609, PubMed:34260587). Acts downstream of the calcium-triggered CaMKK-CaMK1 signaling cascade, consisting of the protein kinase kinase ckk-1 and the protein kinase cmk-1 (PubMed:12231504, PubMed:27720609). Plays a role in learning and memory, feeding behavior, stress response, entry into the dauer stage and modulation of lifespan (PubMed:19035344, PubMed:21331044, PubMed:23013276, PubMed:27720609, PubMed:31413073, PubMed:34260587). Involved in commitment to the developmentally arrested larval state known as dauer, acting by positively regulating the expression of dauer-inhibiting TGF-beta-like daf-7 in the ASI neurons (PubMed:34260587). Plays a role in both associative and non-associative long-term memory (LTM) (PubMed:23013276, PubMed:31413073). Involved in modulating feeding behavior, acting by regulating transcription of tryptophan hydroxylase tph-1 in serotonergic ADF neurons (PubMed:19035344). Regulates transcription of genes involved in endoplasmic reticulum (ER) stress (PubMed:21331044). Involved in modulation of lifespan, in response to raised temperature, but independently of the heat-shock response pathway, acting by regulating transcription of FMRFamide-like neuropeptides flp-6 in the AFD neuron (PubMed:21331044, PubMed:27720609).</text>
</comment>
<comment type="function">
    <molecule>Isoform c</molecule>
    <text evidence="10">Plays a role in associative long-term memory (LTM) and learning.</text>
</comment>
<comment type="function">
    <molecule>Isoform e</molecule>
    <text evidence="10">Plays a role in associative long-term memory (LTM) and learning; perhaps required at the time of acquisition and/or the consolidation phase of memory formation.</text>
</comment>
<comment type="subunit">
    <text evidence="7">Interacts with CREB-regulated transcription coactivator homolog crtc-1.</text>
</comment>
<comment type="interaction">
    <interactant intactId="EBI-6727396">
        <id>Q9U2I0</id>
    </interactant>
    <interactant intactId="EBI-6727396">
        <id>Q9U2I0</id>
        <label>crh-1</label>
    </interactant>
    <organismsDiffer>false</organismsDiffer>
    <experiments>2</experiments>
</comment>
<comment type="subcellular location">
    <subcellularLocation>
        <location evidence="2 3">Nucleus</location>
    </subcellularLocation>
</comment>
<comment type="alternative products">
    <event type="alternative splicing"/>
    <isoform>
        <id>Q9U2I0-1</id>
        <name evidence="19">b</name>
        <sequence type="displayed"/>
    </isoform>
    <isoform>
        <id>Q9U2I0-2</id>
        <name evidence="18">a</name>
        <sequence type="described" ref="VSP_061710"/>
    </isoform>
    <isoform>
        <id>Q9U2I0-3</id>
        <name evidence="20">c</name>
        <sequence type="described" ref="VSP_061708 VSP_061710"/>
    </isoform>
    <isoform>
        <id>Q9U2I0-4</id>
        <name evidence="21">d</name>
        <sequence type="described" ref="VSP_061709 VSP_061710"/>
    </isoform>
    <isoform>
        <id>Q9U2I0-5</id>
        <name evidence="22">e</name>
        <name evidence="14">Cyclic AMP-response element binding protein 1 beta</name>
        <sequence type="described" ref="VSP_061707 VSP_061710"/>
    </isoform>
    <isoform>
        <id>Q9U2I0-6</id>
        <name evidence="23">f</name>
        <sequence type="described" ref="VSP_061705"/>
    </isoform>
    <isoform>
        <id>Q9U2I0-7</id>
        <name evidence="24">g</name>
        <sequence type="described" ref="VSP_061706 VSP_061710 VSP_061711"/>
    </isoform>
</comment>
<comment type="tissue specificity">
    <text evidence="5 7 11">Expressed widely, including in head neurons AFD, gustatory neurons ASE, the olfactory neurons AWC, and in the ASI sensory neurons, as well as in the intestine and gonads in hermaphrodites.</text>
</comment>
<comment type="PTM">
    <text evidence="5 9">Transcriptional activity is enhanced by phosphorylation (PubMed:12231504). Phosphorylated by cmk-1 (PubMed:12231504, PubMed:27720609).</text>
</comment>
<comment type="disruption phenotype">
    <text evidence="7">RNAi-mediated knockdown positively modulates lifespan.</text>
</comment>
<comment type="disruption phenotype">
    <molecule>Isoform c</molecule>
    <text evidence="10">Defects in associative long-term memory (LTM) formation.</text>
</comment>
<comment type="disruption phenotype">
    <molecule>Isoform e</molecule>
    <text evidence="10">Defects in associative long-term memory (LTM) formation.</text>
</comment>
<comment type="similarity">
    <text evidence="13">Belongs to the bZIP family.</text>
</comment>
<feature type="chain" id="PRO_0000456853" description="CREB homolog crh-1">
    <location>
        <begin position="1"/>
        <end position="327"/>
    </location>
</feature>
<feature type="domain" description="KID" evidence="2">
    <location>
        <begin position="16"/>
        <end position="75"/>
    </location>
</feature>
<feature type="domain" description="bZIP" evidence="3">
    <location>
        <begin position="266"/>
        <end position="317"/>
    </location>
</feature>
<feature type="region of interest" description="Disordered" evidence="4">
    <location>
        <begin position="27"/>
        <end position="114"/>
    </location>
</feature>
<feature type="region of interest" description="Disordered" evidence="4">
    <location>
        <begin position="151"/>
        <end position="200"/>
    </location>
</feature>
<feature type="region of interest" description="Basic motif" evidence="3">
    <location>
        <begin position="267"/>
        <end position="292"/>
    </location>
</feature>
<feature type="region of interest" description="Leucine-zipper" evidence="3">
    <location>
        <begin position="294"/>
        <end position="315"/>
    </location>
</feature>
<feature type="coiled-coil region" evidence="1">
    <location>
        <begin position="284"/>
        <end position="318"/>
    </location>
</feature>
<feature type="compositionally biased region" description="Basic and acidic residues" evidence="4">
    <location>
        <begin position="35"/>
        <end position="44"/>
    </location>
</feature>
<feature type="compositionally biased region" description="Basic and acidic residues" evidence="4">
    <location>
        <begin position="52"/>
        <end position="68"/>
    </location>
</feature>
<feature type="compositionally biased region" description="Polar residues" evidence="4">
    <location>
        <begin position="71"/>
        <end position="84"/>
    </location>
</feature>
<feature type="compositionally biased region" description="Gly residues" evidence="4">
    <location>
        <begin position="161"/>
        <end position="172"/>
    </location>
</feature>
<feature type="compositionally biased region" description="Low complexity" evidence="4">
    <location>
        <begin position="173"/>
        <end position="199"/>
    </location>
</feature>
<feature type="modified residue" description="Phosphoserine" evidence="2 5">
    <location>
        <position position="48"/>
    </location>
</feature>
<feature type="splice variant" id="VSP_061705" description="In isoform f." evidence="13">
    <original>MATMASTSNCSPVATSPLMMLLFKALQEGGDSEDEARRRREQLNRRPSYRMILKDLETADKVMKKEPEETPPSSVDASPLQFQSVMRPPPTAPPTSAATPNRILPSSNAASPYGSPLGSSILSNQPLVLPFAPINGDFDFSAAIAAASQPK</original>
    <variation>MESLVFNGHSHMN</variation>
    <location>
        <begin position="1"/>
        <end position="151"/>
    </location>
</feature>
<feature type="splice variant" id="VSP_061706" description="In isoform g." evidence="13">
    <original>MATMASTSNCSPVATSPLMMLLFKALQEGGDSEDEARRRREQLNRRPSYR</original>
    <variation>MGQFILEIYKIRIVSQTHLFSKLIFHSFLSFLFNDFSHLSASLPPLIDLSTKKKLLARASEGATSSSSPLPPASTATLSAFRPPARMIPPPVVLPQQYAPLPGFTPLLPAQAMMANFPPNALYQLGTPPFENGNNRIRFKDAAMVVLSRLSFNQRS</variation>
    <location>
        <begin position="1"/>
        <end position="50"/>
    </location>
</feature>
<feature type="splice variant" id="VSP_061707" description="In isoform e." evidence="13">
    <original>MATMASTSNCSPVATSPLMMLLFK</original>
    <variation>MMFLR</variation>
    <location>
        <begin position="1"/>
        <end position="24"/>
    </location>
</feature>
<feature type="splice variant" id="VSP_061708" description="In isoform c." evidence="13">
    <original>ATMASTSNCSPVATSPLMMLLFK</original>
    <variation>SAKGNGSAQQQS</variation>
    <location>
        <begin position="2"/>
        <end position="24"/>
    </location>
</feature>
<feature type="splice variant" id="VSP_061709" description="In isoform d." evidence="13">
    <original>K</original>
    <variation>KVPNSNT</variation>
    <location>
        <position position="24"/>
    </location>
</feature>
<feature type="splice variant" id="VSP_061710" description="In isoform a, isoform c, isoform d, isoform e and isoform g." evidence="13">
    <location>
        <begin position="81"/>
        <end position="82"/>
    </location>
</feature>
<feature type="splice variant" id="VSP_061711" description="In isoform g." evidence="13">
    <location>
        <begin position="152"/>
        <end position="154"/>
    </location>
</feature>
<feature type="mutagenesis site" description="Abolishes phosphorylation by activated cmk-1." evidence="5">
    <original>S</original>
    <variation>A</variation>
    <location>
        <position position="48"/>
    </location>
</feature>
<feature type="mutagenesis site" description="Defects in associative long-term memory (LTM) formation." evidence="10">
    <original>KRQVRLLKNREAAKECRRKK</original>
    <variation>RRQVRLLKNREAAKECRRKR</variation>
    <location>
        <begin position="268"/>
        <end position="287"/>
    </location>
</feature>
<reference evidence="15 16" key="1">
    <citation type="journal article" date="2002" name="EMBO Rep.">
        <title>A CaMK cascade activates CRE-mediated transcription in neurons of Caenorhabditis elegans.</title>
        <authorList>
            <person name="Kimura Y."/>
            <person name="Corcoran E.E."/>
            <person name="Eto K."/>
            <person name="Gengyo-Ando K."/>
            <person name="Muramatsu M.A."/>
            <person name="Kobayashi R."/>
            <person name="Freedman J.H."/>
            <person name="Mitani S."/>
            <person name="Hagiwara M."/>
            <person name="Means A.R."/>
            <person name="Tokumitsu H."/>
        </authorList>
    </citation>
    <scope>NUCLEOTIDE SEQUENCE [MRNA] (ISOFORMS A AND E)</scope>
    <scope>FUNCTION</scope>
    <scope>TISSUE SPECIFICITY</scope>
    <scope>PHOSPHORYLATION AT SER-48</scope>
    <scope>MUTAGENESIS OF SER-48</scope>
</reference>
<reference evidence="17" key="2">
    <citation type="journal article" date="1998" name="Science">
        <title>Genome sequence of the nematode C. elegans: a platform for investigating biology.</title>
        <authorList>
            <consortium name="The C. elegans sequencing consortium"/>
        </authorList>
    </citation>
    <scope>NUCLEOTIDE SEQUENCE [LARGE SCALE GENOMIC DNA]</scope>
    <source>
        <strain evidence="17">Bristol N2</strain>
    </source>
</reference>
<reference evidence="13" key="3">
    <citation type="journal article" date="2009" name="Am. J. Med. Genet. B Neuropsychiatr. Genet.">
        <title>Identification of a CREB-dependent serotonergic pathway and neuronal circuit regulating foraging behavior in Caenorhabditis elegans: a useful model for mental disorders and their treatments?</title>
        <authorList>
            <person name="Zubenko G.S."/>
            <person name="Jones M.L."/>
            <person name="Estevez A.O."/>
            <person name="Hughes H.B. III"/>
            <person name="Estevez M."/>
        </authorList>
    </citation>
    <scope>FUNCTION</scope>
</reference>
<reference evidence="13" key="4">
    <citation type="journal article" date="2011" name="Nature">
        <title>Lifespan extension induced by AMPK and calcineurin is mediated by CRTC-1 and CREB.</title>
        <authorList>
            <person name="Mair W."/>
            <person name="Morantte I."/>
            <person name="Rodrigues A.P."/>
            <person name="Manning G."/>
            <person name="Montminy M."/>
            <person name="Shaw R.J."/>
            <person name="Dillin A."/>
        </authorList>
    </citation>
    <scope>FUNCTION</scope>
    <scope>INTERACTION WITH CRTC-1</scope>
    <scope>TISSUE SPECIFICITY</scope>
    <scope>DISRUPTION PHENOTYPE</scope>
</reference>
<reference evidence="13" key="5">
    <citation type="journal article" date="2013" name="Genes Brain Behav.">
        <title>Genetic dissection of memory for associative and non-associative learning in Caenorhabditis elegans.</title>
        <authorList>
            <person name="Lau H.L."/>
            <person name="Timbers T.A."/>
            <person name="Mahmoud R."/>
            <person name="Rankin C.H."/>
        </authorList>
    </citation>
    <scope>FUNCTION</scope>
</reference>
<reference evidence="13" key="6">
    <citation type="journal article" date="2016" name="Dev. Cell">
        <title>A C. elegans Thermosensory Circuit Regulates Longevity through crh-1/CREB-Dependent flp-6 Neuropeptide Signaling.</title>
        <authorList>
            <person name="Chen Y.C."/>
            <person name="Chen H.J."/>
            <person name="Tseng W.C."/>
            <person name="Hsu J.M."/>
            <person name="Huang T.T."/>
            <person name="Chen C.H."/>
            <person name="Pan C.L."/>
        </authorList>
    </citation>
    <scope>FUNCTION</scope>
    <scope>PHOSPHORYLATION</scope>
</reference>
<reference evidence="13" key="7">
    <citation type="journal article" date="2019" name="J. Neurosci.">
        <title>Differential Regulation of Innate and Learned Behavior by Creb1/Crh-1 in Caenorhabditis elegans.</title>
        <authorList>
            <person name="Dahiya Y."/>
            <person name="Rose S."/>
            <person name="Thapliyal S."/>
            <person name="Bhardwaj S."/>
            <person name="Prasad M."/>
            <person name="Babu K."/>
        </authorList>
    </citation>
    <scope>FUNCTION</scope>
    <scope>FUNCTION (ISOFORMS C AND E)</scope>
    <scope>DISRUPTION PHENOTYPE (ISOFORMS C AND E)</scope>
    <scope>MUTAGENESIS OF 268-LYS--LYS-287</scope>
</reference>
<reference evidence="13" key="8">
    <citation type="journal article" date="2021" name="PLoS Genet.">
        <title>CREB mediates the C. elegans dauer polyphenism through direct and cell-autonomous regulation of TGF-beta expression.</title>
        <authorList>
            <person name="Park J."/>
            <person name="Oh H."/>
            <person name="Kim D.Y."/>
            <person name="Cheon Y."/>
            <person name="Park Y.J."/>
            <person name="Hwang H."/>
            <person name="Neal S.J."/>
            <person name="Dar A.R."/>
            <person name="Butcher R.A."/>
            <person name="Sengupta P."/>
            <person name="Kim D.W."/>
            <person name="Kim K."/>
        </authorList>
    </citation>
    <scope>FUNCTION</scope>
    <scope>TISSUE SPECIFICITY</scope>
</reference>
<dbReference type="EMBL" id="AB081595">
    <property type="protein sequence ID" value="BAC19842.1"/>
    <property type="molecule type" value="mRNA"/>
</dbReference>
<dbReference type="EMBL" id="AB081596">
    <property type="protein sequence ID" value="BAC19843.1"/>
    <property type="molecule type" value="mRNA"/>
</dbReference>
<dbReference type="EMBL" id="BX284603">
    <property type="protein sequence ID" value="CAB54381.2"/>
    <property type="molecule type" value="Genomic_DNA"/>
</dbReference>
<dbReference type="EMBL" id="BX284603">
    <property type="protein sequence ID" value="CAB54382.2"/>
    <property type="molecule type" value="Genomic_DNA"/>
</dbReference>
<dbReference type="EMBL" id="BX284603">
    <property type="protein sequence ID" value="CAD45607.2"/>
    <property type="molecule type" value="Genomic_DNA"/>
</dbReference>
<dbReference type="EMBL" id="BX284603">
    <property type="protein sequence ID" value="CAD56255.1"/>
    <property type="molecule type" value="Genomic_DNA"/>
</dbReference>
<dbReference type="EMBL" id="BX284603">
    <property type="protein sequence ID" value="CAD56256.1"/>
    <property type="molecule type" value="Genomic_DNA"/>
</dbReference>
<dbReference type="EMBL" id="BX284603">
    <property type="protein sequence ID" value="CBI63240.1"/>
    <property type="molecule type" value="Genomic_DNA"/>
</dbReference>
<dbReference type="EMBL" id="BX284603">
    <property type="protein sequence ID" value="CBI63241.1"/>
    <property type="molecule type" value="Genomic_DNA"/>
</dbReference>
<dbReference type="PIR" id="T26807">
    <property type="entry name" value="T26807"/>
</dbReference>
<dbReference type="PIR" id="T26808">
    <property type="entry name" value="T26808"/>
</dbReference>
<dbReference type="RefSeq" id="NP_001022859.1">
    <molecule id="Q9U2I0-2"/>
    <property type="nucleotide sequence ID" value="NM_001027688.6"/>
</dbReference>
<dbReference type="RefSeq" id="NP_001022860.1">
    <molecule id="Q9U2I0-1"/>
    <property type="nucleotide sequence ID" value="NM_001027689.3"/>
</dbReference>
<dbReference type="RefSeq" id="NP_001022861.1">
    <molecule id="Q9U2I0-3"/>
    <property type="nucleotide sequence ID" value="NM_001027690.4"/>
</dbReference>
<dbReference type="RefSeq" id="NP_001022862.1">
    <molecule id="Q9U2I0-4"/>
    <property type="nucleotide sequence ID" value="NM_001027691.4"/>
</dbReference>
<dbReference type="RefSeq" id="NP_001022863.1">
    <molecule id="Q9U2I0-5"/>
    <property type="nucleotide sequence ID" value="NM_001027692.4"/>
</dbReference>
<dbReference type="RefSeq" id="NP_001255135.1">
    <molecule id="Q9U2I0-7"/>
    <property type="nucleotide sequence ID" value="NM_001268206.3"/>
</dbReference>
<dbReference type="RefSeq" id="NP_001255136.1">
    <molecule id="Q9U2I0-6"/>
    <property type="nucleotide sequence ID" value="NM_001268207.3"/>
</dbReference>
<dbReference type="SMR" id="Q9U2I0"/>
<dbReference type="FunCoup" id="Q9U2I0">
    <property type="interactions" value="4"/>
</dbReference>
<dbReference type="IntAct" id="Q9U2I0">
    <property type="interactions" value="2"/>
</dbReference>
<dbReference type="STRING" id="6239.Y41C4A.4g.1"/>
<dbReference type="iPTMnet" id="Q9U2I0"/>
<dbReference type="PaxDb" id="6239-Y41C4A.4g"/>
<dbReference type="EnsemblMetazoa" id="Y41C4A.4a.1">
    <molecule id="Q9U2I0-2"/>
    <property type="protein sequence ID" value="Y41C4A.4a.1"/>
    <property type="gene ID" value="WBGene00000793"/>
</dbReference>
<dbReference type="EnsemblMetazoa" id="Y41C4A.4b.1">
    <molecule id="Q9U2I0-1"/>
    <property type="protein sequence ID" value="Y41C4A.4b.1"/>
    <property type="gene ID" value="WBGene00000793"/>
</dbReference>
<dbReference type="EnsemblMetazoa" id="Y41C4A.4c.1">
    <molecule id="Q9U2I0-3"/>
    <property type="protein sequence ID" value="Y41C4A.4c.1"/>
    <property type="gene ID" value="WBGene00000793"/>
</dbReference>
<dbReference type="EnsemblMetazoa" id="Y41C4A.4d.1">
    <molecule id="Q9U2I0-4"/>
    <property type="protein sequence ID" value="Y41C4A.4d.1"/>
    <property type="gene ID" value="WBGene00000793"/>
</dbReference>
<dbReference type="EnsemblMetazoa" id="Y41C4A.4e.1">
    <molecule id="Q9U2I0-5"/>
    <property type="protein sequence ID" value="Y41C4A.4e.1"/>
    <property type="gene ID" value="WBGene00000793"/>
</dbReference>
<dbReference type="EnsemblMetazoa" id="Y41C4A.4f.1">
    <molecule id="Q9U2I0-6"/>
    <property type="protein sequence ID" value="Y41C4A.4f.1"/>
    <property type="gene ID" value="WBGene00000793"/>
</dbReference>
<dbReference type="EnsemblMetazoa" id="Y41C4A.4g.1">
    <molecule id="Q9U2I0-7"/>
    <property type="protein sequence ID" value="Y41C4A.4g.1"/>
    <property type="gene ID" value="WBGene00000793"/>
</dbReference>
<dbReference type="GeneID" id="176597"/>
<dbReference type="KEGG" id="cel:CELE_Y41C4A.4"/>
<dbReference type="UCSC" id="Y41C4A.4c">
    <property type="organism name" value="c. elegans"/>
</dbReference>
<dbReference type="AGR" id="WB:WBGene00000793"/>
<dbReference type="CTD" id="176597"/>
<dbReference type="WormBase" id="Y41C4A.4a">
    <molecule id="Q9U2I0-2"/>
    <property type="protein sequence ID" value="CE32249"/>
    <property type="gene ID" value="WBGene00000793"/>
    <property type="gene designation" value="crh-1"/>
</dbReference>
<dbReference type="WormBase" id="Y41C4A.4b">
    <molecule id="Q9U2I0-1"/>
    <property type="protein sequence ID" value="CE32250"/>
    <property type="gene ID" value="WBGene00000793"/>
    <property type="gene designation" value="crh-1"/>
</dbReference>
<dbReference type="WormBase" id="Y41C4A.4c">
    <molecule id="Q9U2I0-3"/>
    <property type="protein sequence ID" value="CE32251"/>
    <property type="gene ID" value="WBGene00000793"/>
    <property type="gene designation" value="crh-1"/>
</dbReference>
<dbReference type="WormBase" id="Y41C4A.4d">
    <molecule id="Q9U2I0-4"/>
    <property type="protein sequence ID" value="CE32252"/>
    <property type="gene ID" value="WBGene00000793"/>
    <property type="gene designation" value="crh-1"/>
</dbReference>
<dbReference type="WormBase" id="Y41C4A.4e">
    <molecule id="Q9U2I0-5"/>
    <property type="protein sequence ID" value="CE32253"/>
    <property type="gene ID" value="WBGene00000793"/>
    <property type="gene designation" value="crh-1"/>
</dbReference>
<dbReference type="WormBase" id="Y41C4A.4f">
    <molecule id="Q9U2I0-6"/>
    <property type="protein sequence ID" value="CE44296"/>
    <property type="gene ID" value="WBGene00000793"/>
    <property type="gene designation" value="crh-1"/>
</dbReference>
<dbReference type="WormBase" id="Y41C4A.4g">
    <molecule id="Q9U2I0-7"/>
    <property type="protein sequence ID" value="CE44284"/>
    <property type="gene ID" value="WBGene00000793"/>
    <property type="gene designation" value="crh-1"/>
</dbReference>
<dbReference type="eggNOG" id="KOG3584">
    <property type="taxonomic scope" value="Eukaryota"/>
</dbReference>
<dbReference type="GeneTree" id="ENSGT00940000173530"/>
<dbReference type="HOGENOM" id="CLU_840014_0_0_1"/>
<dbReference type="OMA" id="MTSTSNC"/>
<dbReference type="OrthoDB" id="5970722at2759"/>
<dbReference type="Reactome" id="R-CEL-198693">
    <property type="pathway name" value="AKT phosphorylates targets in the nucleus"/>
</dbReference>
<dbReference type="Reactome" id="R-CEL-199920">
    <property type="pathway name" value="CREB phosphorylation"/>
</dbReference>
<dbReference type="Reactome" id="R-CEL-375165">
    <property type="pathway name" value="NCAM signaling for neurite out-growth"/>
</dbReference>
<dbReference type="Reactome" id="R-CEL-442742">
    <property type="pathway name" value="CREB1 phosphorylation through NMDA receptor-mediated activation of RAS signaling"/>
</dbReference>
<dbReference type="Reactome" id="R-CEL-881907">
    <property type="pathway name" value="Gastrin-CREB signalling pathway via PKC and MAPK"/>
</dbReference>
<dbReference type="Reactome" id="R-CEL-9031628">
    <property type="pathway name" value="NGF-stimulated transcription"/>
</dbReference>
<dbReference type="Reactome" id="R-CEL-9634638">
    <property type="pathway name" value="Estrogen-dependent nuclear events downstream of ESR-membrane signaling"/>
</dbReference>
<dbReference type="PRO" id="PR:Q9U2I0"/>
<dbReference type="Proteomes" id="UP000001940">
    <property type="component" value="Chromosome III"/>
</dbReference>
<dbReference type="Bgee" id="WBGene00000793">
    <property type="expression patterns" value="Expressed in pharyngeal muscle cell (C elegans) and 13 other cell types or tissues"/>
</dbReference>
<dbReference type="ExpressionAtlas" id="Q9U2I0">
    <property type="expression patterns" value="baseline and differential"/>
</dbReference>
<dbReference type="GO" id="GO:0000785">
    <property type="term" value="C:chromatin"/>
    <property type="evidence" value="ECO:0000314"/>
    <property type="project" value="UniProtKB"/>
</dbReference>
<dbReference type="GO" id="GO:0005634">
    <property type="term" value="C:nucleus"/>
    <property type="evidence" value="ECO:0000314"/>
    <property type="project" value="UniProtKB"/>
</dbReference>
<dbReference type="GO" id="GO:0005667">
    <property type="term" value="C:transcription regulator complex"/>
    <property type="evidence" value="ECO:0000318"/>
    <property type="project" value="GO_Central"/>
</dbReference>
<dbReference type="GO" id="GO:0000987">
    <property type="term" value="F:cis-regulatory region sequence-specific DNA binding"/>
    <property type="evidence" value="ECO:0000314"/>
    <property type="project" value="UniProtKB"/>
</dbReference>
<dbReference type="GO" id="GO:0001228">
    <property type="term" value="F:DNA-binding transcription activator activity, RNA polymerase II-specific"/>
    <property type="evidence" value="ECO:0000315"/>
    <property type="project" value="UniProtKB"/>
</dbReference>
<dbReference type="GO" id="GO:0000981">
    <property type="term" value="F:DNA-binding transcription factor activity, RNA polymerase II-specific"/>
    <property type="evidence" value="ECO:0000318"/>
    <property type="project" value="GO_Central"/>
</dbReference>
<dbReference type="GO" id="GO:0042802">
    <property type="term" value="F:identical protein binding"/>
    <property type="evidence" value="ECO:0000353"/>
    <property type="project" value="IntAct"/>
</dbReference>
<dbReference type="GO" id="GO:0000978">
    <property type="term" value="F:RNA polymerase II cis-regulatory region sequence-specific DNA binding"/>
    <property type="evidence" value="ECO:0000318"/>
    <property type="project" value="GO_Central"/>
</dbReference>
<dbReference type="GO" id="GO:0001223">
    <property type="term" value="F:transcription coactivator binding"/>
    <property type="evidence" value="ECO:0000353"/>
    <property type="project" value="WormBase"/>
</dbReference>
<dbReference type="GO" id="GO:0043053">
    <property type="term" value="P:dauer entry"/>
    <property type="evidence" value="ECO:0000315"/>
    <property type="project" value="UniProtKB"/>
</dbReference>
<dbReference type="GO" id="GO:0008340">
    <property type="term" value="P:determination of adult lifespan"/>
    <property type="evidence" value="ECO:0000315"/>
    <property type="project" value="WormBase"/>
</dbReference>
<dbReference type="GO" id="GO:0035556">
    <property type="term" value="P:intracellular signal transduction"/>
    <property type="evidence" value="ECO:0000314"/>
    <property type="project" value="WormBase"/>
</dbReference>
<dbReference type="GO" id="GO:0045944">
    <property type="term" value="P:positive regulation of transcription by RNA polymerase II"/>
    <property type="evidence" value="ECO:0000315"/>
    <property type="project" value="UniProtKB"/>
</dbReference>
<dbReference type="GO" id="GO:0006357">
    <property type="term" value="P:regulation of transcription by RNA polymerase II"/>
    <property type="evidence" value="ECO:0000315"/>
    <property type="project" value="WormBase"/>
</dbReference>
<dbReference type="GO" id="GO:0007210">
    <property type="term" value="P:serotonin receptor signaling pathway"/>
    <property type="evidence" value="ECO:0000315"/>
    <property type="project" value="UniProtKB"/>
</dbReference>
<dbReference type="CDD" id="cd14690">
    <property type="entry name" value="bZIP_CREB1"/>
    <property type="match status" value="1"/>
</dbReference>
<dbReference type="FunFam" id="1.20.5.170:FF:000003">
    <property type="entry name" value="cAMP-responsive element modulator isoform X2"/>
    <property type="match status" value="1"/>
</dbReference>
<dbReference type="Gene3D" id="1.20.5.170">
    <property type="match status" value="1"/>
</dbReference>
<dbReference type="InterPro" id="IPR004827">
    <property type="entry name" value="bZIP"/>
</dbReference>
<dbReference type="InterPro" id="IPR046347">
    <property type="entry name" value="bZIP_sf"/>
</dbReference>
<dbReference type="InterPro" id="IPR003102">
    <property type="entry name" value="CREB1-like_pKID"/>
</dbReference>
<dbReference type="InterPro" id="IPR001630">
    <property type="entry name" value="Leuzip_CREB"/>
</dbReference>
<dbReference type="PANTHER" id="PTHR45879">
    <property type="entry name" value="CYCLIC AMP RESPONSE ELEMENT-BINDING PROTEIN B"/>
    <property type="match status" value="1"/>
</dbReference>
<dbReference type="PANTHER" id="PTHR45879:SF3">
    <property type="entry name" value="CYCLIC AMP RESPONSE ELEMENT-BINDING PROTEIN B"/>
    <property type="match status" value="1"/>
</dbReference>
<dbReference type="Pfam" id="PF00170">
    <property type="entry name" value="bZIP_1"/>
    <property type="match status" value="1"/>
</dbReference>
<dbReference type="Pfam" id="PF02173">
    <property type="entry name" value="pKID"/>
    <property type="match status" value="1"/>
</dbReference>
<dbReference type="SMART" id="SM00338">
    <property type="entry name" value="BRLZ"/>
    <property type="match status" value="1"/>
</dbReference>
<dbReference type="SUPFAM" id="SSF57959">
    <property type="entry name" value="Leucine zipper domain"/>
    <property type="match status" value="1"/>
</dbReference>
<dbReference type="PROSITE" id="PS50217">
    <property type="entry name" value="BZIP"/>
    <property type="match status" value="1"/>
</dbReference>
<dbReference type="PROSITE" id="PS00036">
    <property type="entry name" value="BZIP_BASIC"/>
    <property type="match status" value="1"/>
</dbReference>
<dbReference type="PROSITE" id="PS50953">
    <property type="entry name" value="KID"/>
    <property type="match status" value="1"/>
</dbReference>
<evidence type="ECO:0000255" key="1"/>
<evidence type="ECO:0000255" key="2">
    <source>
        <dbReference type="PROSITE-ProRule" id="PRU00312"/>
    </source>
</evidence>
<evidence type="ECO:0000255" key="3">
    <source>
        <dbReference type="PROSITE-ProRule" id="PRU00978"/>
    </source>
</evidence>
<evidence type="ECO:0000256" key="4">
    <source>
        <dbReference type="SAM" id="MobiDB-lite"/>
    </source>
</evidence>
<evidence type="ECO:0000269" key="5">
    <source>
    </source>
</evidence>
<evidence type="ECO:0000269" key="6">
    <source>
    </source>
</evidence>
<evidence type="ECO:0000269" key="7">
    <source>
    </source>
</evidence>
<evidence type="ECO:0000269" key="8">
    <source>
    </source>
</evidence>
<evidence type="ECO:0000269" key="9">
    <source>
    </source>
</evidence>
<evidence type="ECO:0000269" key="10">
    <source>
    </source>
</evidence>
<evidence type="ECO:0000269" key="11">
    <source>
    </source>
</evidence>
<evidence type="ECO:0000303" key="12">
    <source>
    </source>
</evidence>
<evidence type="ECO:0000305" key="13"/>
<evidence type="ECO:0000305" key="14">
    <source>
    </source>
</evidence>
<evidence type="ECO:0000312" key="15">
    <source>
        <dbReference type="EMBL" id="BAC19842.1"/>
    </source>
</evidence>
<evidence type="ECO:0000312" key="16">
    <source>
        <dbReference type="EMBL" id="BAC19843.1"/>
    </source>
</evidence>
<evidence type="ECO:0000312" key="17">
    <source>
        <dbReference type="Proteomes" id="UP000001940"/>
    </source>
</evidence>
<evidence type="ECO:0000312" key="18">
    <source>
        <dbReference type="WormBase" id="Y41C4A.4a"/>
    </source>
</evidence>
<evidence type="ECO:0000312" key="19">
    <source>
        <dbReference type="WormBase" id="Y41C4A.4b"/>
    </source>
</evidence>
<evidence type="ECO:0000312" key="20">
    <source>
        <dbReference type="WormBase" id="Y41C4A.4c"/>
    </source>
</evidence>
<evidence type="ECO:0000312" key="21">
    <source>
        <dbReference type="WormBase" id="Y41C4A.4d"/>
    </source>
</evidence>
<evidence type="ECO:0000312" key="22">
    <source>
        <dbReference type="WormBase" id="Y41C4A.4e"/>
    </source>
</evidence>
<evidence type="ECO:0000312" key="23">
    <source>
        <dbReference type="WormBase" id="Y41C4A.4f"/>
    </source>
</evidence>
<evidence type="ECO:0000312" key="24">
    <source>
        <dbReference type="WormBase" id="Y41C4A.4g"/>
    </source>
</evidence>
<protein>
    <recommendedName>
        <fullName evidence="12">CREB homolog crh-1</fullName>
    </recommendedName>
    <alternativeName>
        <fullName evidence="19">Cyclic AMP responsive element binding protein crh-1</fullName>
    </alternativeName>
</protein>
<name>CREBH_CAEEL</name>